<organism>
    <name type="scientific">Mus musculus</name>
    <name type="common">Mouse</name>
    <dbReference type="NCBI Taxonomy" id="10090"/>
    <lineage>
        <taxon>Eukaryota</taxon>
        <taxon>Metazoa</taxon>
        <taxon>Chordata</taxon>
        <taxon>Craniata</taxon>
        <taxon>Vertebrata</taxon>
        <taxon>Euteleostomi</taxon>
        <taxon>Mammalia</taxon>
        <taxon>Eutheria</taxon>
        <taxon>Euarchontoglires</taxon>
        <taxon>Glires</taxon>
        <taxon>Rodentia</taxon>
        <taxon>Myomorpha</taxon>
        <taxon>Muroidea</taxon>
        <taxon>Muridae</taxon>
        <taxon>Murinae</taxon>
        <taxon>Mus</taxon>
        <taxon>Mus</taxon>
    </lineage>
</organism>
<feature type="initiator methionine" description="Removed" evidence="3">
    <location>
        <position position="1"/>
    </location>
</feature>
<feature type="chain" id="PRO_0000198682" description="Myosin light chain 1/3, skeletal muscle isoform">
    <location>
        <begin position="2"/>
        <end position="188"/>
    </location>
</feature>
<feature type="domain" description="EF-hand 1" evidence="5">
    <location>
        <begin position="44"/>
        <end position="79"/>
    </location>
</feature>
<feature type="domain" description="EF-hand 2" evidence="5">
    <location>
        <begin position="121"/>
        <end position="156"/>
    </location>
</feature>
<feature type="domain" description="EF-hand 3" evidence="5">
    <location>
        <begin position="156"/>
        <end position="188"/>
    </location>
</feature>
<feature type="region of interest" description="Disordered" evidence="6">
    <location>
        <begin position="1"/>
        <end position="30"/>
    </location>
</feature>
<feature type="compositionally biased region" description="Pro residues" evidence="6">
    <location>
        <begin position="13"/>
        <end position="25"/>
    </location>
</feature>
<feature type="modified residue" description="N,N,N-trimethylalanine" evidence="3">
    <location>
        <position position="2"/>
    </location>
</feature>
<feature type="modified residue" description="Phosphothreonine" evidence="2">
    <location>
        <position position="65"/>
    </location>
</feature>
<feature type="modified residue" description="Phosphoserine" evidence="2">
    <location>
        <position position="67"/>
    </location>
</feature>
<feature type="modified residue" description="Phosphothreonine" evidence="2">
    <location>
        <position position="81"/>
    </location>
</feature>
<feature type="modified residue" description="Phosphoserine" evidence="2">
    <location>
        <position position="93"/>
    </location>
</feature>
<feature type="splice variant" id="VSP_038687" description="In isoform MLC3." evidence="7">
    <original>MAPKKDVKKPAAAPAPAPAPAPAPAKPKEEKIDLSAIKIEFSKEQQE</original>
    <variation>MSFSADQIA</variation>
    <location>
        <begin position="1"/>
        <end position="47"/>
    </location>
</feature>
<feature type="initiator methionine" description="Removed" evidence="7">
    <location sequence="P05977-2">
        <position position="1"/>
    </location>
</feature>
<feature type="modified residue" description="N-acetylalanine" evidence="7">
    <location sequence="P05977-2">
        <position position="2"/>
    </location>
</feature>
<accession>P05977</accession>
<accession>P05978</accession>
<proteinExistence type="evidence at protein level"/>
<gene>
    <name type="primary">Myl1</name>
    <name type="synonym">Mylf</name>
</gene>
<keyword id="KW-0002">3D-structure</keyword>
<keyword id="KW-0007">Acetylation</keyword>
<keyword id="KW-0025">Alternative splicing</keyword>
<keyword id="KW-0488">Methylation</keyword>
<keyword id="KW-0505">Motor protein</keyword>
<keyword id="KW-0514">Muscle protein</keyword>
<keyword id="KW-0518">Myosin</keyword>
<keyword id="KW-0597">Phosphoprotein</keyword>
<keyword id="KW-1185">Reference proteome</keyword>
<keyword id="KW-0677">Repeat</keyword>
<evidence type="ECO:0000250" key="1"/>
<evidence type="ECO:0000250" key="2">
    <source>
        <dbReference type="UniProtKB" id="P02600"/>
    </source>
</evidence>
<evidence type="ECO:0000250" key="3">
    <source>
        <dbReference type="UniProtKB" id="P02602"/>
    </source>
</evidence>
<evidence type="ECO:0000250" key="4">
    <source>
        <dbReference type="UniProtKB" id="P05976"/>
    </source>
</evidence>
<evidence type="ECO:0000255" key="5">
    <source>
        <dbReference type="PROSITE-ProRule" id="PRU00448"/>
    </source>
</evidence>
<evidence type="ECO:0000256" key="6">
    <source>
        <dbReference type="SAM" id="MobiDB-lite"/>
    </source>
</evidence>
<evidence type="ECO:0000305" key="7"/>
<comment type="function">
    <text evidence="4">Non-regulatory myosin light chain required for proper formation and/or maintenance of myofibers, and thus appropriate muscle function.</text>
</comment>
<comment type="subunit">
    <text evidence="4">Myosin is a hexamer of 2 heavy chains and 4 light chains. Does not bind calcium.</text>
</comment>
<comment type="alternative products">
    <event type="alternative splicing"/>
    <isoform>
        <id>P05977-1</id>
        <name>MLC1</name>
        <sequence type="displayed"/>
    </isoform>
    <isoform>
        <id>P05977-2</id>
        <id>P05978-1</id>
        <name>MLC3</name>
        <sequence type="described" ref="VSP_038687"/>
    </isoform>
</comment>
<comment type="PTM">
    <text evidence="1">Isoform MLC3 is acetylated at position 2.</text>
</comment>
<reference key="1">
    <citation type="journal article" date="1984" name="Cell">
        <title>A single locus in the mouse encodes both myosin light chains 1 and 3, a second locus corresponds to a related pseudogene.</title>
        <authorList>
            <person name="Robert B."/>
            <person name="Daubas P."/>
            <person name="Akimenko M.-A."/>
            <person name="Cohen A."/>
            <person name="Garner I."/>
            <person name="Guenet J.-L."/>
            <person name="Buckingham M.E."/>
        </authorList>
    </citation>
    <scope>NUCLEOTIDE SEQUENCE [GENOMIC DNA]</scope>
    <scope>ALTERNATIVE SPLICING</scope>
</reference>
<reference key="2">
    <citation type="journal article" date="1988" name="Nucleic Acids Res.">
        <title>Promoter analysis of myosin alkali light chain genes expressed in mouse striated muscle.</title>
        <authorList>
            <person name="Cohen A."/>
            <person name="Barton P.J.R."/>
            <person name="Robert B."/>
            <person name="Garner I."/>
            <person name="Alonso S."/>
            <person name="Buckingham M.E."/>
        </authorList>
    </citation>
    <scope>NUCLEOTIDE SEQUENCE [GENOMIC DNA] OF 1-38</scope>
</reference>
<reference key="3">
    <citation type="journal article" date="2010" name="Cell">
        <title>A tissue-specific atlas of mouse protein phosphorylation and expression.</title>
        <authorList>
            <person name="Huttlin E.L."/>
            <person name="Jedrychowski M.P."/>
            <person name="Elias J.E."/>
            <person name="Goswami T."/>
            <person name="Rad R."/>
            <person name="Beausoleil S.A."/>
            <person name="Villen J."/>
            <person name="Haas W."/>
            <person name="Sowa M.E."/>
            <person name="Gygi S.P."/>
        </authorList>
    </citation>
    <scope>IDENTIFICATION BY MASS SPECTROMETRY [LARGE SCALE ANALYSIS]</scope>
    <source>
        <tissue>Brown adipose tissue</tissue>
    </source>
</reference>
<name>MYL1_MOUSE</name>
<dbReference type="EMBL" id="K02241">
    <property type="protein sequence ID" value="AAA39718.1"/>
    <property type="molecule type" value="Genomic_DNA"/>
</dbReference>
<dbReference type="EMBL" id="K02237">
    <property type="protein sequence ID" value="AAA39718.1"/>
    <property type="status" value="JOINED"/>
    <property type="molecule type" value="Genomic_DNA"/>
</dbReference>
<dbReference type="EMBL" id="K02238">
    <property type="protein sequence ID" value="AAA39718.1"/>
    <property type="status" value="JOINED"/>
    <property type="molecule type" value="Genomic_DNA"/>
</dbReference>
<dbReference type="EMBL" id="K02239">
    <property type="protein sequence ID" value="AAA39718.1"/>
    <property type="status" value="JOINED"/>
    <property type="molecule type" value="Genomic_DNA"/>
</dbReference>
<dbReference type="EMBL" id="K02240">
    <property type="protein sequence ID" value="AAA39718.1"/>
    <property type="status" value="JOINED"/>
    <property type="molecule type" value="Genomic_DNA"/>
</dbReference>
<dbReference type="EMBL" id="K02241">
    <property type="protein sequence ID" value="AAA39719.1"/>
    <property type="molecule type" value="Genomic_DNA"/>
</dbReference>
<dbReference type="EMBL" id="K02238">
    <property type="protein sequence ID" value="AAA39719.1"/>
    <property type="status" value="JOINED"/>
    <property type="molecule type" value="Genomic_DNA"/>
</dbReference>
<dbReference type="EMBL" id="K02239">
    <property type="protein sequence ID" value="AAA39719.1"/>
    <property type="status" value="JOINED"/>
    <property type="molecule type" value="Genomic_DNA"/>
</dbReference>
<dbReference type="EMBL" id="K02240">
    <property type="protein sequence ID" value="AAA39719.1"/>
    <property type="status" value="JOINED"/>
    <property type="molecule type" value="Genomic_DNA"/>
</dbReference>
<dbReference type="EMBL" id="X12973">
    <property type="protein sequence ID" value="CAA31416.1"/>
    <property type="molecule type" value="Genomic_DNA"/>
</dbReference>
<dbReference type="CCDS" id="CCDS15024.1">
    <molecule id="P05977-1"/>
</dbReference>
<dbReference type="CCDS" id="CCDS48284.1">
    <molecule id="P05977-2"/>
</dbReference>
<dbReference type="PIR" id="A23253">
    <property type="entry name" value="A23253"/>
</dbReference>
<dbReference type="PIR" id="B23253">
    <property type="entry name" value="B23253"/>
</dbReference>
<dbReference type="RefSeq" id="NP_001106858.1">
    <molecule id="P05977-2"/>
    <property type="nucleotide sequence ID" value="NM_001113387.2"/>
</dbReference>
<dbReference type="RefSeq" id="NP_001407262.1">
    <molecule id="P05977-1"/>
    <property type="nucleotide sequence ID" value="NM_001420333.1"/>
</dbReference>
<dbReference type="RefSeq" id="NP_001407263.1">
    <molecule id="P05977-2"/>
    <property type="nucleotide sequence ID" value="NM_001420334.1"/>
</dbReference>
<dbReference type="RefSeq" id="NP_067260.1">
    <molecule id="P05977-1"/>
    <property type="nucleotide sequence ID" value="NM_021285.4"/>
</dbReference>
<dbReference type="RefSeq" id="XP_006495826.1">
    <property type="nucleotide sequence ID" value="XM_006495763.1"/>
</dbReference>
<dbReference type="RefSeq" id="XP_036018509.1">
    <molecule id="P05977-1"/>
    <property type="nucleotide sequence ID" value="XM_036162616.1"/>
</dbReference>
<dbReference type="RefSeq" id="XP_036018511.1">
    <molecule id="P05977-1"/>
    <property type="nucleotide sequence ID" value="XM_036162618.1"/>
</dbReference>
<dbReference type="PDB" id="7NEP">
    <property type="method" value="EM"/>
    <property type="resolution" value="10.20 A"/>
    <property type="chains" value="N/O=40-187"/>
</dbReference>
<dbReference type="PDB" id="7QIO">
    <property type="method" value="EM"/>
    <property type="resolution" value="9.00 A"/>
    <property type="chains" value="N/O=1-188"/>
</dbReference>
<dbReference type="PDB" id="8EFD">
    <property type="method" value="EM"/>
    <property type="resolution" value="3.80 A"/>
    <property type="chains" value="B=1-188"/>
</dbReference>
<dbReference type="PDB" id="8EFE">
    <property type="method" value="EM"/>
    <property type="resolution" value="3.80 A"/>
    <property type="chains" value="B=1-188"/>
</dbReference>
<dbReference type="PDB" id="9GZ1">
    <property type="method" value="EM"/>
    <property type="resolution" value="3.70 A"/>
    <property type="chains" value="C/E=2-188"/>
</dbReference>
<dbReference type="PDBsum" id="7NEP"/>
<dbReference type="PDBsum" id="7QIO"/>
<dbReference type="PDBsum" id="8EFD"/>
<dbReference type="PDBsum" id="8EFE"/>
<dbReference type="PDBsum" id="9GZ1"/>
<dbReference type="EMDB" id="EMD-12289"/>
<dbReference type="EMDB" id="EMD-13993"/>
<dbReference type="EMDB" id="EMD-28080"/>
<dbReference type="EMDB" id="EMD-28081"/>
<dbReference type="EMDB" id="EMD-51719"/>
<dbReference type="SMR" id="P05977"/>
<dbReference type="BioGRID" id="201656">
    <property type="interactions" value="5"/>
</dbReference>
<dbReference type="FunCoup" id="P05977">
    <property type="interactions" value="158"/>
</dbReference>
<dbReference type="IntAct" id="P05977">
    <property type="interactions" value="4"/>
</dbReference>
<dbReference type="MINT" id="P05977"/>
<dbReference type="STRING" id="10090.ENSMUSP00000027151"/>
<dbReference type="iPTMnet" id="P05977"/>
<dbReference type="PhosphoSitePlus" id="P05977"/>
<dbReference type="jPOST" id="P05977"/>
<dbReference type="PaxDb" id="10090-ENSMUSP00000027151"/>
<dbReference type="PeptideAtlas" id="P05977"/>
<dbReference type="ProteomicsDB" id="287529">
    <molecule id="P05977-1"/>
</dbReference>
<dbReference type="ProteomicsDB" id="287530">
    <molecule id="P05977-2"/>
</dbReference>
<dbReference type="Pumba" id="P05977"/>
<dbReference type="Antibodypedia" id="20019">
    <property type="antibodies" value="223 antibodies from 27 providers"/>
</dbReference>
<dbReference type="DNASU" id="17901"/>
<dbReference type="Ensembl" id="ENSMUST00000027151.12">
    <molecule id="P05977-1"/>
    <property type="protein sequence ID" value="ENSMUSP00000027151.6"/>
    <property type="gene ID" value="ENSMUSG00000061816.16"/>
</dbReference>
<dbReference type="Ensembl" id="ENSMUST00000119429.8">
    <molecule id="P05977-2"/>
    <property type="protein sequence ID" value="ENSMUSP00000112861.2"/>
    <property type="gene ID" value="ENSMUSG00000061816.16"/>
</dbReference>
<dbReference type="GeneID" id="17901"/>
<dbReference type="KEGG" id="mmu:17901"/>
<dbReference type="UCSC" id="uc007bit.2">
    <molecule id="P05977-1"/>
    <property type="organism name" value="mouse"/>
</dbReference>
<dbReference type="AGR" id="MGI:97269"/>
<dbReference type="CTD" id="4632"/>
<dbReference type="MGI" id="MGI:97269">
    <property type="gene designation" value="Myl1"/>
</dbReference>
<dbReference type="VEuPathDB" id="HostDB:ENSMUSG00000061816"/>
<dbReference type="eggNOG" id="KOG0030">
    <property type="taxonomic scope" value="Eukaryota"/>
</dbReference>
<dbReference type="GeneTree" id="ENSGT01030000234570"/>
<dbReference type="HOGENOM" id="CLU_061288_13_0_1"/>
<dbReference type="InParanoid" id="P05977"/>
<dbReference type="OMA" id="NPTNEEM"/>
<dbReference type="OrthoDB" id="5959761at2759"/>
<dbReference type="PhylomeDB" id="P05977"/>
<dbReference type="TreeFam" id="TF351553"/>
<dbReference type="Reactome" id="R-MMU-390522">
    <property type="pathway name" value="Striated Muscle Contraction"/>
</dbReference>
<dbReference type="BioGRID-ORCS" id="17901">
    <property type="hits" value="1 hit in 76 CRISPR screens"/>
</dbReference>
<dbReference type="ChiTaRS" id="Myl1">
    <property type="organism name" value="mouse"/>
</dbReference>
<dbReference type="PRO" id="PR:P05977"/>
<dbReference type="Proteomes" id="UP000000589">
    <property type="component" value="Chromosome 1"/>
</dbReference>
<dbReference type="RNAct" id="P05977">
    <property type="molecule type" value="protein"/>
</dbReference>
<dbReference type="Bgee" id="ENSMUSG00000061816">
    <property type="expression patterns" value="Expressed in quadriceps femoris and 84 other cell types or tissues"/>
</dbReference>
<dbReference type="ExpressionAtlas" id="P05977">
    <property type="expression patterns" value="baseline and differential"/>
</dbReference>
<dbReference type="GO" id="GO:0030016">
    <property type="term" value="C:myofibril"/>
    <property type="evidence" value="ECO:0007669"/>
    <property type="project" value="Ensembl"/>
</dbReference>
<dbReference type="GO" id="GO:0016459">
    <property type="term" value="C:myosin complex"/>
    <property type="evidence" value="ECO:0007669"/>
    <property type="project" value="UniProtKB-KW"/>
</dbReference>
<dbReference type="GO" id="GO:0005509">
    <property type="term" value="F:calcium ion binding"/>
    <property type="evidence" value="ECO:0007669"/>
    <property type="project" value="InterPro"/>
</dbReference>
<dbReference type="GO" id="GO:0008307">
    <property type="term" value="F:structural constituent of muscle"/>
    <property type="evidence" value="ECO:0000250"/>
    <property type="project" value="UniProtKB"/>
</dbReference>
<dbReference type="GO" id="GO:0006936">
    <property type="term" value="P:muscle contraction"/>
    <property type="evidence" value="ECO:0007669"/>
    <property type="project" value="Ensembl"/>
</dbReference>
<dbReference type="CDD" id="cd00051">
    <property type="entry name" value="EFh"/>
    <property type="match status" value="1"/>
</dbReference>
<dbReference type="FunFam" id="1.10.238.10:FF:000019">
    <property type="entry name" value="Myosin light chain 1 skeletal"/>
    <property type="match status" value="1"/>
</dbReference>
<dbReference type="FunFam" id="1.10.238.10:FF:000056">
    <property type="entry name" value="Myosin light chain 1 skeletal"/>
    <property type="match status" value="1"/>
</dbReference>
<dbReference type="Gene3D" id="1.10.238.10">
    <property type="entry name" value="EF-hand"/>
    <property type="match status" value="2"/>
</dbReference>
<dbReference type="InterPro" id="IPR050230">
    <property type="entry name" value="CALM/Myosin/TropC-like"/>
</dbReference>
<dbReference type="InterPro" id="IPR011992">
    <property type="entry name" value="EF-hand-dom_pair"/>
</dbReference>
<dbReference type="InterPro" id="IPR002048">
    <property type="entry name" value="EF_hand_dom"/>
</dbReference>
<dbReference type="PANTHER" id="PTHR23048">
    <property type="entry name" value="MYOSIN LIGHT CHAIN 1, 3"/>
    <property type="match status" value="1"/>
</dbReference>
<dbReference type="PANTHER" id="PTHR23048:SF3">
    <property type="entry name" value="MYOSIN LIGHT CHAIN 1_3, SKELETAL MUSCLE ISOFORM"/>
    <property type="match status" value="1"/>
</dbReference>
<dbReference type="SUPFAM" id="SSF47473">
    <property type="entry name" value="EF-hand"/>
    <property type="match status" value="1"/>
</dbReference>
<dbReference type="PROSITE" id="PS50222">
    <property type="entry name" value="EF_HAND_2"/>
    <property type="match status" value="3"/>
</dbReference>
<protein>
    <recommendedName>
        <fullName>Myosin light chain 1/3, skeletal muscle isoform</fullName>
        <shortName>MLC1/MLC3</shortName>
        <shortName>MLC1F/MLC3F</shortName>
    </recommendedName>
    <alternativeName>
        <fullName>Myosin light chain alkali 1/2</fullName>
        <shortName>Myosin light chain A1/A2</shortName>
    </alternativeName>
</protein>
<sequence>MAPKKDVKKPAAAPAPAPAPAPAPAKPKEEKIDLSAIKIEFSKEQQEDFKEAFLLFDRTGECKITLSQVGDVLRALGTNPTNAEVKKVLGNPSNEEMNAKKIEFEQFLPMMQAISNNKDQGGYEDFVEGLRVFDKEGNGTVMGAELRHVLATLGEKMKEEEVEALLAGQEDSNGCINYEAFVKHIMSV</sequence>